<organism>
    <name type="scientific">Thermoplasma volcanium (strain ATCC 51530 / DSM 4299 / JCM 9571 / NBRC 15438 / GSS1)</name>
    <dbReference type="NCBI Taxonomy" id="273116"/>
    <lineage>
        <taxon>Archaea</taxon>
        <taxon>Methanobacteriati</taxon>
        <taxon>Thermoplasmatota</taxon>
        <taxon>Thermoplasmata</taxon>
        <taxon>Thermoplasmatales</taxon>
        <taxon>Thermoplasmataceae</taxon>
        <taxon>Thermoplasma</taxon>
    </lineage>
</organism>
<sequence length="260" mass="28502">MVKESAEILSEIRKNYILTTMKGGKRIDGRLPDEFREITIIENYVPRANGSAYVALGKTRVVAGVKIEAGEPFPDTPDQGVLTTNVELLPIAFPSFEAGPPNDLAIEVSRVVDRGIRESKMISPDKLVIEQGKKVWIVFLDINVLDYDGNLIDACTIAAVSALRNAIVPASREGGEDFKLPVVNTPISVTMVKIGDTLVCDPSLEEDQICGGRITVTTTEDGHIRAMQKGEIGVFTLDDVKKAIKMSLKVGKNIREKYFR</sequence>
<feature type="chain" id="PRO_0000140009" description="Exosome complex component Rrp42">
    <location>
        <begin position="1"/>
        <end position="260"/>
    </location>
</feature>
<protein>
    <recommendedName>
        <fullName evidence="1">Exosome complex component Rrp42</fullName>
    </recommendedName>
</protein>
<keyword id="KW-0963">Cytoplasm</keyword>
<keyword id="KW-0271">Exosome</keyword>
<accession>Q97BZ4</accession>
<evidence type="ECO:0000255" key="1">
    <source>
        <dbReference type="HAMAP-Rule" id="MF_00622"/>
    </source>
</evidence>
<comment type="function">
    <text evidence="1">Non-catalytic component of the exosome, which is a complex involved in RNA degradation. Contributes to the structuring of the Rrp41 active site.</text>
</comment>
<comment type="subunit">
    <text evidence="1">Component of the archaeal exosome complex. Forms a hexameric ring-like arrangement composed of 3 Rrp41-Rrp42 heterodimers. The hexameric ring associates with a trimer of Rrp4 and/or Csl4 subunits.</text>
</comment>
<comment type="subcellular location">
    <subcellularLocation>
        <location evidence="1">Cytoplasm</location>
    </subcellularLocation>
</comment>
<comment type="similarity">
    <text evidence="1">Belongs to the RNase PH family. Rrp42 subfamily.</text>
</comment>
<dbReference type="EMBL" id="BA000011">
    <property type="protein sequence ID" value="BAB59453.1"/>
    <property type="molecule type" value="Genomic_DNA"/>
</dbReference>
<dbReference type="RefSeq" id="WP_010916566.1">
    <property type="nucleotide sequence ID" value="NC_002689.2"/>
</dbReference>
<dbReference type="SMR" id="Q97BZ4"/>
<dbReference type="STRING" id="273116.gene:9381086"/>
<dbReference type="PaxDb" id="273116-14324526"/>
<dbReference type="GeneID" id="1440824"/>
<dbReference type="KEGG" id="tvo:TVG0320734"/>
<dbReference type="eggNOG" id="arCOG01574">
    <property type="taxonomic scope" value="Archaea"/>
</dbReference>
<dbReference type="HOGENOM" id="CLU_038194_0_0_2"/>
<dbReference type="OrthoDB" id="30932at2157"/>
<dbReference type="PhylomeDB" id="Q97BZ4"/>
<dbReference type="Proteomes" id="UP000001017">
    <property type="component" value="Chromosome"/>
</dbReference>
<dbReference type="GO" id="GO:0000177">
    <property type="term" value="C:cytoplasmic exosome (RNase complex)"/>
    <property type="evidence" value="ECO:0007669"/>
    <property type="project" value="TreeGrafter"/>
</dbReference>
<dbReference type="GO" id="GO:0035925">
    <property type="term" value="F:mRNA 3'-UTR AU-rich region binding"/>
    <property type="evidence" value="ECO:0007669"/>
    <property type="project" value="TreeGrafter"/>
</dbReference>
<dbReference type="GO" id="GO:0016075">
    <property type="term" value="P:rRNA catabolic process"/>
    <property type="evidence" value="ECO:0007669"/>
    <property type="project" value="TreeGrafter"/>
</dbReference>
<dbReference type="CDD" id="cd11365">
    <property type="entry name" value="RNase_PH_archRRP42"/>
    <property type="match status" value="1"/>
</dbReference>
<dbReference type="FunFam" id="3.30.230.70:FF:000017">
    <property type="entry name" value="Exosome complex component Rrp42"/>
    <property type="match status" value="1"/>
</dbReference>
<dbReference type="Gene3D" id="3.30.230.70">
    <property type="entry name" value="GHMP Kinase, N-terminal domain"/>
    <property type="match status" value="1"/>
</dbReference>
<dbReference type="HAMAP" id="MF_00622">
    <property type="entry name" value="Exosome_Rrp42"/>
    <property type="match status" value="1"/>
</dbReference>
<dbReference type="InterPro" id="IPR001247">
    <property type="entry name" value="ExoRNase_PH_dom1"/>
</dbReference>
<dbReference type="InterPro" id="IPR015847">
    <property type="entry name" value="ExoRNase_PH_dom2"/>
</dbReference>
<dbReference type="InterPro" id="IPR036345">
    <property type="entry name" value="ExoRNase_PH_dom2_sf"/>
</dbReference>
<dbReference type="InterPro" id="IPR050590">
    <property type="entry name" value="Exosome_comp_Rrp42_subfam"/>
</dbReference>
<dbReference type="InterPro" id="IPR027408">
    <property type="entry name" value="PNPase/RNase_PH_dom_sf"/>
</dbReference>
<dbReference type="InterPro" id="IPR020568">
    <property type="entry name" value="Ribosomal_Su5_D2-typ_SF"/>
</dbReference>
<dbReference type="InterPro" id="IPR020869">
    <property type="entry name" value="Rrp42_archaea"/>
</dbReference>
<dbReference type="NCBIfam" id="NF003282">
    <property type="entry name" value="PRK04282.1-1"/>
    <property type="match status" value="1"/>
</dbReference>
<dbReference type="PANTHER" id="PTHR11097:SF8">
    <property type="entry name" value="EXOSOME COMPLEX COMPONENT RRP42"/>
    <property type="match status" value="1"/>
</dbReference>
<dbReference type="PANTHER" id="PTHR11097">
    <property type="entry name" value="EXOSOME COMPLEX EXONUCLEASE RIBOSOMAL RNA PROCESSING PROTEIN"/>
    <property type="match status" value="1"/>
</dbReference>
<dbReference type="Pfam" id="PF01138">
    <property type="entry name" value="RNase_PH"/>
    <property type="match status" value="1"/>
</dbReference>
<dbReference type="Pfam" id="PF03725">
    <property type="entry name" value="RNase_PH_C"/>
    <property type="match status" value="1"/>
</dbReference>
<dbReference type="SUPFAM" id="SSF55666">
    <property type="entry name" value="Ribonuclease PH domain 2-like"/>
    <property type="match status" value="1"/>
</dbReference>
<dbReference type="SUPFAM" id="SSF54211">
    <property type="entry name" value="Ribosomal protein S5 domain 2-like"/>
    <property type="match status" value="1"/>
</dbReference>
<gene>
    <name evidence="1" type="primary">rrp42</name>
    <name type="ordered locus">TV0311</name>
    <name type="ORF">TVG0320734</name>
</gene>
<name>RRP42_THEVO</name>
<proteinExistence type="inferred from homology"/>
<reference key="1">
    <citation type="journal article" date="2000" name="Proc. Natl. Acad. Sci. U.S.A.">
        <title>Archaeal adaptation to higher temperatures revealed by genomic sequence of Thermoplasma volcanium.</title>
        <authorList>
            <person name="Kawashima T."/>
            <person name="Amano N."/>
            <person name="Koike H."/>
            <person name="Makino S."/>
            <person name="Higuchi S."/>
            <person name="Kawashima-Ohya Y."/>
            <person name="Watanabe K."/>
            <person name="Yamazaki M."/>
            <person name="Kanehori K."/>
            <person name="Kawamoto T."/>
            <person name="Nunoshiba T."/>
            <person name="Yamamoto Y."/>
            <person name="Aramaki H."/>
            <person name="Makino K."/>
            <person name="Suzuki M."/>
        </authorList>
    </citation>
    <scope>NUCLEOTIDE SEQUENCE [LARGE SCALE GENOMIC DNA]</scope>
    <source>
        <strain>ATCC 51530 / DSM 4299 / JCM 9571 / NBRC 15438 / GSS1</strain>
    </source>
</reference>